<comment type="function">
    <text evidence="1">Forms part of the ribosomal stalk, playing a central role in the interaction of the ribosome with GTP-bound translation factors.</text>
</comment>
<comment type="subunit">
    <text evidence="1">Part of the 50S ribosomal subunit. Forms part of the ribosomal stalk which helps the ribosome interact with GTP-bound translation factors. Forms a heptameric L10(L12)2(L12)2(L12)2 complex, where L10 forms an elongated spine to which the L12 dimers bind in a sequential fashion.</text>
</comment>
<comment type="similarity">
    <text evidence="1">Belongs to the universal ribosomal protein uL10 family.</text>
</comment>
<organism>
    <name type="scientific">Methanosarcina acetivorans (strain ATCC 35395 / DSM 2834 / JCM 12185 / C2A)</name>
    <dbReference type="NCBI Taxonomy" id="188937"/>
    <lineage>
        <taxon>Archaea</taxon>
        <taxon>Methanobacteriati</taxon>
        <taxon>Methanobacteriota</taxon>
        <taxon>Stenosarchaea group</taxon>
        <taxon>Methanomicrobia</taxon>
        <taxon>Methanosarcinales</taxon>
        <taxon>Methanosarcinaceae</taxon>
        <taxon>Methanosarcina</taxon>
    </lineage>
</organism>
<sequence length="347" mass="37167">MAEERHHTEHIPQWKKDEIENIKELIQSHKVFGMVGIEGILATKMQKIRRDLKDVAVLKVSRNTLTERALNQLGETIPGMKEYLDKQTALIFTNESPFKLYKLLEQTKTPSPIRGGAIAPADITVQKGPTSFPPGPILGELQSAGIPASIDAGKVAVKETKVVCKAGEVVPQKLATMLSKLEIYPLIVGLDLRAAYDDGTIYEPELLAVDESKYFSDIIRAAQNAFNLSVNTAFPTSATISTLLAKASSEAKNLGVNAVILEPGVMDTLLAKAHVQMTSVASEAADKDANAVDDDLREVLGAAASAAAAAAAAAPAEEEVKKEEEPEEEEEDHAEEDGMAGLGALFG</sequence>
<name>RL10_METAC</name>
<reference key="1">
    <citation type="journal article" date="2002" name="Genome Res.">
        <title>The genome of Methanosarcina acetivorans reveals extensive metabolic and physiological diversity.</title>
        <authorList>
            <person name="Galagan J.E."/>
            <person name="Nusbaum C."/>
            <person name="Roy A."/>
            <person name="Endrizzi M.G."/>
            <person name="Macdonald P."/>
            <person name="FitzHugh W."/>
            <person name="Calvo S."/>
            <person name="Engels R."/>
            <person name="Smirnov S."/>
            <person name="Atnoor D."/>
            <person name="Brown A."/>
            <person name="Allen N."/>
            <person name="Naylor J."/>
            <person name="Stange-Thomann N."/>
            <person name="DeArellano K."/>
            <person name="Johnson R."/>
            <person name="Linton L."/>
            <person name="McEwan P."/>
            <person name="McKernan K."/>
            <person name="Talamas J."/>
            <person name="Tirrell A."/>
            <person name="Ye W."/>
            <person name="Zimmer A."/>
            <person name="Barber R.D."/>
            <person name="Cann I."/>
            <person name="Graham D.E."/>
            <person name="Grahame D.A."/>
            <person name="Guss A.M."/>
            <person name="Hedderich R."/>
            <person name="Ingram-Smith C."/>
            <person name="Kuettner H.C."/>
            <person name="Krzycki J.A."/>
            <person name="Leigh J.A."/>
            <person name="Li W."/>
            <person name="Liu J."/>
            <person name="Mukhopadhyay B."/>
            <person name="Reeve J.N."/>
            <person name="Smith K."/>
            <person name="Springer T.A."/>
            <person name="Umayam L.A."/>
            <person name="White O."/>
            <person name="White R.H."/>
            <person name="de Macario E.C."/>
            <person name="Ferry J.G."/>
            <person name="Jarrell K.F."/>
            <person name="Jing H."/>
            <person name="Macario A.J.L."/>
            <person name="Paulsen I.T."/>
            <person name="Pritchett M."/>
            <person name="Sowers K.R."/>
            <person name="Swanson R.V."/>
            <person name="Zinder S.H."/>
            <person name="Lander E."/>
            <person name="Metcalf W.W."/>
            <person name="Birren B."/>
        </authorList>
    </citation>
    <scope>NUCLEOTIDE SEQUENCE [LARGE SCALE GENOMIC DNA]</scope>
    <source>
        <strain>ATCC 35395 / DSM 2834 / JCM 12185 / C2A</strain>
    </source>
</reference>
<accession>Q8TI80</accession>
<dbReference type="EMBL" id="AE010299">
    <property type="protein sequence ID" value="AAM07620.1"/>
    <property type="molecule type" value="Genomic_DNA"/>
</dbReference>
<dbReference type="RefSeq" id="WP_011024157.1">
    <property type="nucleotide sequence ID" value="NC_003552.1"/>
</dbReference>
<dbReference type="SMR" id="Q8TI80"/>
<dbReference type="FunCoup" id="Q8TI80">
    <property type="interactions" value="167"/>
</dbReference>
<dbReference type="STRING" id="188937.MA_4276"/>
<dbReference type="EnsemblBacteria" id="AAM07620">
    <property type="protein sequence ID" value="AAM07620"/>
    <property type="gene ID" value="MA_4276"/>
</dbReference>
<dbReference type="GeneID" id="1476170"/>
<dbReference type="KEGG" id="mac:MA_4276"/>
<dbReference type="HOGENOM" id="CLU_053173_0_0_2"/>
<dbReference type="InParanoid" id="Q8TI80"/>
<dbReference type="OrthoDB" id="30930at2157"/>
<dbReference type="PhylomeDB" id="Q8TI80"/>
<dbReference type="Proteomes" id="UP000002487">
    <property type="component" value="Chromosome"/>
</dbReference>
<dbReference type="GO" id="GO:0022625">
    <property type="term" value="C:cytosolic large ribosomal subunit"/>
    <property type="evidence" value="ECO:0000318"/>
    <property type="project" value="GO_Central"/>
</dbReference>
<dbReference type="GO" id="GO:0070180">
    <property type="term" value="F:large ribosomal subunit rRNA binding"/>
    <property type="evidence" value="ECO:0000318"/>
    <property type="project" value="GO_Central"/>
</dbReference>
<dbReference type="GO" id="GO:0003735">
    <property type="term" value="F:structural constituent of ribosome"/>
    <property type="evidence" value="ECO:0000318"/>
    <property type="project" value="GO_Central"/>
</dbReference>
<dbReference type="GO" id="GO:0002181">
    <property type="term" value="P:cytoplasmic translation"/>
    <property type="evidence" value="ECO:0000318"/>
    <property type="project" value="GO_Central"/>
</dbReference>
<dbReference type="CDD" id="cd05795">
    <property type="entry name" value="Ribosomal_P0_L10e"/>
    <property type="match status" value="1"/>
</dbReference>
<dbReference type="Gene3D" id="3.30.70.1730">
    <property type="match status" value="1"/>
</dbReference>
<dbReference type="Gene3D" id="3.90.105.20">
    <property type="match status" value="1"/>
</dbReference>
<dbReference type="Gene3D" id="6.10.140.760">
    <property type="match status" value="1"/>
</dbReference>
<dbReference type="HAMAP" id="MF_00280">
    <property type="entry name" value="Ribosomal_uL10_arch"/>
    <property type="match status" value="1"/>
</dbReference>
<dbReference type="InterPro" id="IPR050323">
    <property type="entry name" value="Ribosomal_protein_uL10"/>
</dbReference>
<dbReference type="InterPro" id="IPR001790">
    <property type="entry name" value="Ribosomal_uL10"/>
</dbReference>
<dbReference type="InterPro" id="IPR040637">
    <property type="entry name" value="Ribosomal_uL10-like_insert"/>
</dbReference>
<dbReference type="InterPro" id="IPR043164">
    <property type="entry name" value="Ribosomal_uL10-like_insert_sf"/>
</dbReference>
<dbReference type="InterPro" id="IPR043141">
    <property type="entry name" value="Ribosomal_uL10-like_sf"/>
</dbReference>
<dbReference type="InterPro" id="IPR022909">
    <property type="entry name" value="Ribosomal_uL10_arc"/>
</dbReference>
<dbReference type="NCBIfam" id="NF003098">
    <property type="entry name" value="PRK04019.1-5"/>
    <property type="match status" value="1"/>
</dbReference>
<dbReference type="PANTHER" id="PTHR45699">
    <property type="entry name" value="60S ACIDIC RIBOSOMAL PROTEIN P0"/>
    <property type="match status" value="1"/>
</dbReference>
<dbReference type="PANTHER" id="PTHR45699:SF3">
    <property type="entry name" value="LARGE RIBOSOMAL SUBUNIT PROTEIN UL10"/>
    <property type="match status" value="1"/>
</dbReference>
<dbReference type="Pfam" id="PF00466">
    <property type="entry name" value="Ribosomal_L10"/>
    <property type="match status" value="1"/>
</dbReference>
<dbReference type="Pfam" id="PF17777">
    <property type="entry name" value="RL10P_insert"/>
    <property type="match status" value="1"/>
</dbReference>
<dbReference type="SUPFAM" id="SSF160369">
    <property type="entry name" value="Ribosomal protein L10-like"/>
    <property type="match status" value="1"/>
</dbReference>
<feature type="chain" id="PRO_0000154792" description="Large ribosomal subunit protein uL10">
    <location>
        <begin position="1"/>
        <end position="347"/>
    </location>
</feature>
<feature type="region of interest" description="Disordered" evidence="2">
    <location>
        <begin position="312"/>
        <end position="347"/>
    </location>
</feature>
<feature type="compositionally biased region" description="Acidic residues" evidence="2">
    <location>
        <begin position="325"/>
        <end position="338"/>
    </location>
</feature>
<proteinExistence type="inferred from homology"/>
<gene>
    <name evidence="1" type="primary">rpl10</name>
    <name evidence="1" type="synonym">rplP0</name>
    <name type="ordered locus">MA_4276</name>
</gene>
<protein>
    <recommendedName>
        <fullName evidence="1">Large ribosomal subunit protein uL10</fullName>
    </recommendedName>
    <alternativeName>
        <fullName evidence="3">50S ribosomal protein L10</fullName>
    </alternativeName>
    <alternativeName>
        <fullName evidence="1">Acidic ribosomal protein P0 homolog</fullName>
    </alternativeName>
</protein>
<evidence type="ECO:0000255" key="1">
    <source>
        <dbReference type="HAMAP-Rule" id="MF_00280"/>
    </source>
</evidence>
<evidence type="ECO:0000256" key="2">
    <source>
        <dbReference type="SAM" id="MobiDB-lite"/>
    </source>
</evidence>
<evidence type="ECO:0000305" key="3"/>
<keyword id="KW-1185">Reference proteome</keyword>
<keyword id="KW-0687">Ribonucleoprotein</keyword>
<keyword id="KW-0689">Ribosomal protein</keyword>
<keyword id="KW-0694">RNA-binding</keyword>
<keyword id="KW-0699">rRNA-binding</keyword>